<reference key="1">
    <citation type="journal article" date="2008" name="PLoS ONE">
        <title>Genome sequence of a lancefield group C Streptococcus zooepidemicus strain causing epidemic nephritis: new information about an old disease.</title>
        <authorList>
            <person name="Beres S.B."/>
            <person name="Sesso R."/>
            <person name="Pinto S.W.L."/>
            <person name="Hoe N.P."/>
            <person name="Porcella S.F."/>
            <person name="Deleo F.R."/>
            <person name="Musser J.M."/>
        </authorList>
    </citation>
    <scope>NUCLEOTIDE SEQUENCE [LARGE SCALE GENOMIC DNA]</scope>
    <source>
        <strain>MGCS10565</strain>
    </source>
</reference>
<proteinExistence type="inferred from homology"/>
<keyword id="KW-0012">Acyltransferase</keyword>
<keyword id="KW-0963">Cytoplasm</keyword>
<keyword id="KW-0275">Fatty acid biosynthesis</keyword>
<keyword id="KW-0276">Fatty acid metabolism</keyword>
<keyword id="KW-0444">Lipid biosynthesis</keyword>
<keyword id="KW-0443">Lipid metabolism</keyword>
<keyword id="KW-0511">Multifunctional enzyme</keyword>
<keyword id="KW-0808">Transferase</keyword>
<name>FABH_STREM</name>
<accession>B4U1B3</accession>
<gene>
    <name evidence="1" type="primary">fabH</name>
    <name type="ordered locus">Sez_0406</name>
</gene>
<sequence>MVFSKISQVAHYTPKQVISNDDLSQIMDTSHEWISSRTGIEKRHISTVEMTSDLAIRVAEQLLAGSGYDATALDFIIVATISPDASMPSTAAKVQAAIGATNAFAFDMTAACSGFVFALAMADKLIASGAYQRGLVIGAETLSKIIDWQDRSTAVLFGDGAGGVLLEASEQQHFLAEALHTDGARSQSLTSGQSSLRSPFSQGQEVNSFLQMDGRAIFDFAIRDVSRSIAAIIEQSGLAKEELDYLLLHQANRRILDKMAKKIGMPREKFLENMMHYGNTSAASIPILLSESVQNGQLKLDGSQHILLSGFGGGLTWGSLIVKI</sequence>
<protein>
    <recommendedName>
        <fullName evidence="1">Beta-ketoacyl-[acyl-carrier-protein] synthase III</fullName>
        <shortName evidence="1">Beta-ketoacyl-ACP synthase III</shortName>
        <shortName evidence="1">KAS III</shortName>
        <ecNumber evidence="1">2.3.1.180</ecNumber>
    </recommendedName>
    <alternativeName>
        <fullName evidence="1">3-oxoacyl-[acyl-carrier-protein] synthase 3</fullName>
    </alternativeName>
    <alternativeName>
        <fullName evidence="1">3-oxoacyl-[acyl-carrier-protein] synthase III</fullName>
    </alternativeName>
</protein>
<comment type="function">
    <text evidence="1">Catalyzes the condensation reaction of fatty acid synthesis by the addition to an acyl acceptor of two carbons from malonyl-ACP. Catalyzes the first condensation reaction which initiates fatty acid synthesis and may therefore play a role in governing the total rate of fatty acid production. Possesses both acetoacetyl-ACP synthase and acetyl transacylase activities. Its substrate specificity determines the biosynthesis of branched-chain and/or straight-chain of fatty acids.</text>
</comment>
<comment type="catalytic activity">
    <reaction evidence="1">
        <text>malonyl-[ACP] + acetyl-CoA + H(+) = 3-oxobutanoyl-[ACP] + CO2 + CoA</text>
        <dbReference type="Rhea" id="RHEA:12080"/>
        <dbReference type="Rhea" id="RHEA-COMP:9623"/>
        <dbReference type="Rhea" id="RHEA-COMP:9625"/>
        <dbReference type="ChEBI" id="CHEBI:15378"/>
        <dbReference type="ChEBI" id="CHEBI:16526"/>
        <dbReference type="ChEBI" id="CHEBI:57287"/>
        <dbReference type="ChEBI" id="CHEBI:57288"/>
        <dbReference type="ChEBI" id="CHEBI:78449"/>
        <dbReference type="ChEBI" id="CHEBI:78450"/>
        <dbReference type="EC" id="2.3.1.180"/>
    </reaction>
</comment>
<comment type="pathway">
    <text evidence="1">Lipid metabolism; fatty acid biosynthesis.</text>
</comment>
<comment type="subunit">
    <text evidence="1">Homodimer.</text>
</comment>
<comment type="subcellular location">
    <subcellularLocation>
        <location evidence="1">Cytoplasm</location>
    </subcellularLocation>
</comment>
<comment type="domain">
    <text evidence="1">The last Arg residue of the ACP-binding site is essential for the weak association between ACP/AcpP and FabH.</text>
</comment>
<comment type="similarity">
    <text evidence="1">Belongs to the thiolase-like superfamily. FabH family.</text>
</comment>
<feature type="chain" id="PRO_1000187897" description="Beta-ketoacyl-[acyl-carrier-protein] synthase III">
    <location>
        <begin position="1"/>
        <end position="324"/>
    </location>
</feature>
<feature type="region of interest" description="ACP-binding" evidence="1">
    <location>
        <begin position="250"/>
        <end position="254"/>
    </location>
</feature>
<feature type="active site" evidence="1">
    <location>
        <position position="112"/>
    </location>
</feature>
<feature type="active site" evidence="1">
    <location>
        <position position="249"/>
    </location>
</feature>
<feature type="active site" evidence="1">
    <location>
        <position position="279"/>
    </location>
</feature>
<evidence type="ECO:0000255" key="1">
    <source>
        <dbReference type="HAMAP-Rule" id="MF_01815"/>
    </source>
</evidence>
<dbReference type="EC" id="2.3.1.180" evidence="1"/>
<dbReference type="EMBL" id="CP001129">
    <property type="protein sequence ID" value="ACG61780.1"/>
    <property type="molecule type" value="Genomic_DNA"/>
</dbReference>
<dbReference type="RefSeq" id="WP_012515056.1">
    <property type="nucleotide sequence ID" value="NC_011134.1"/>
</dbReference>
<dbReference type="SMR" id="B4U1B3"/>
<dbReference type="KEGG" id="sez:Sez_0406"/>
<dbReference type="HOGENOM" id="CLU_039592_4_1_9"/>
<dbReference type="UniPathway" id="UPA00094"/>
<dbReference type="Proteomes" id="UP000001873">
    <property type="component" value="Chromosome"/>
</dbReference>
<dbReference type="GO" id="GO:0005737">
    <property type="term" value="C:cytoplasm"/>
    <property type="evidence" value="ECO:0007669"/>
    <property type="project" value="UniProtKB-SubCell"/>
</dbReference>
<dbReference type="GO" id="GO:0004315">
    <property type="term" value="F:3-oxoacyl-[acyl-carrier-protein] synthase activity"/>
    <property type="evidence" value="ECO:0007669"/>
    <property type="project" value="InterPro"/>
</dbReference>
<dbReference type="GO" id="GO:0033818">
    <property type="term" value="F:beta-ketoacyl-acyl-carrier-protein synthase III activity"/>
    <property type="evidence" value="ECO:0007669"/>
    <property type="project" value="UniProtKB-UniRule"/>
</dbReference>
<dbReference type="GO" id="GO:0006633">
    <property type="term" value="P:fatty acid biosynthetic process"/>
    <property type="evidence" value="ECO:0007669"/>
    <property type="project" value="UniProtKB-UniRule"/>
</dbReference>
<dbReference type="CDD" id="cd00830">
    <property type="entry name" value="KAS_III"/>
    <property type="match status" value="1"/>
</dbReference>
<dbReference type="Gene3D" id="3.40.47.10">
    <property type="match status" value="1"/>
</dbReference>
<dbReference type="HAMAP" id="MF_01815">
    <property type="entry name" value="FabH"/>
    <property type="match status" value="1"/>
</dbReference>
<dbReference type="InterPro" id="IPR013747">
    <property type="entry name" value="ACP_syn_III_C"/>
</dbReference>
<dbReference type="InterPro" id="IPR013751">
    <property type="entry name" value="ACP_syn_III_N"/>
</dbReference>
<dbReference type="InterPro" id="IPR004655">
    <property type="entry name" value="FabH"/>
</dbReference>
<dbReference type="InterPro" id="IPR016039">
    <property type="entry name" value="Thiolase-like"/>
</dbReference>
<dbReference type="NCBIfam" id="TIGR00747">
    <property type="entry name" value="fabH"/>
    <property type="match status" value="1"/>
</dbReference>
<dbReference type="NCBIfam" id="NF006829">
    <property type="entry name" value="PRK09352.1"/>
    <property type="match status" value="1"/>
</dbReference>
<dbReference type="PANTHER" id="PTHR43091">
    <property type="entry name" value="3-OXOACYL-[ACYL-CARRIER-PROTEIN] SYNTHASE"/>
    <property type="match status" value="1"/>
</dbReference>
<dbReference type="PANTHER" id="PTHR43091:SF1">
    <property type="entry name" value="BETA-KETOACYL-[ACYL-CARRIER-PROTEIN] SYNTHASE III, CHLOROPLASTIC"/>
    <property type="match status" value="1"/>
</dbReference>
<dbReference type="Pfam" id="PF08545">
    <property type="entry name" value="ACP_syn_III"/>
    <property type="match status" value="1"/>
</dbReference>
<dbReference type="Pfam" id="PF08541">
    <property type="entry name" value="ACP_syn_III_C"/>
    <property type="match status" value="1"/>
</dbReference>
<dbReference type="SUPFAM" id="SSF53901">
    <property type="entry name" value="Thiolase-like"/>
    <property type="match status" value="1"/>
</dbReference>
<organism>
    <name type="scientific">Streptococcus equi subsp. zooepidemicus (strain MGCS10565)</name>
    <dbReference type="NCBI Taxonomy" id="552526"/>
    <lineage>
        <taxon>Bacteria</taxon>
        <taxon>Bacillati</taxon>
        <taxon>Bacillota</taxon>
        <taxon>Bacilli</taxon>
        <taxon>Lactobacillales</taxon>
        <taxon>Streptococcaceae</taxon>
        <taxon>Streptococcus</taxon>
    </lineage>
</organism>